<name>GCSP_MYCA1</name>
<comment type="function">
    <text evidence="1">The glycine cleavage system catalyzes the degradation of glycine. The P protein binds the alpha-amino group of glycine through its pyridoxal phosphate cofactor; CO(2) is released and the remaining methylamine moiety is then transferred to the lipoamide cofactor of the H protein.</text>
</comment>
<comment type="catalytic activity">
    <reaction evidence="1">
        <text>N(6)-[(R)-lipoyl]-L-lysyl-[glycine-cleavage complex H protein] + glycine + H(+) = N(6)-[(R)-S(8)-aminomethyldihydrolipoyl]-L-lysyl-[glycine-cleavage complex H protein] + CO2</text>
        <dbReference type="Rhea" id="RHEA:24304"/>
        <dbReference type="Rhea" id="RHEA-COMP:10494"/>
        <dbReference type="Rhea" id="RHEA-COMP:10495"/>
        <dbReference type="ChEBI" id="CHEBI:15378"/>
        <dbReference type="ChEBI" id="CHEBI:16526"/>
        <dbReference type="ChEBI" id="CHEBI:57305"/>
        <dbReference type="ChEBI" id="CHEBI:83099"/>
        <dbReference type="ChEBI" id="CHEBI:83143"/>
        <dbReference type="EC" id="1.4.4.2"/>
    </reaction>
</comment>
<comment type="cofactor">
    <cofactor evidence="1">
        <name>pyridoxal 5'-phosphate</name>
        <dbReference type="ChEBI" id="CHEBI:597326"/>
    </cofactor>
</comment>
<comment type="subunit">
    <text evidence="1">The glycine cleavage system is composed of four proteins: P, T, L and H.</text>
</comment>
<comment type="similarity">
    <text evidence="1">Belongs to the GcvP family.</text>
</comment>
<gene>
    <name evidence="1" type="primary">gcvP</name>
    <name type="ordered locus">MAV_2884</name>
</gene>
<proteinExistence type="inferred from homology"/>
<protein>
    <recommendedName>
        <fullName evidence="1">Glycine dehydrogenase (decarboxylating)</fullName>
        <ecNumber evidence="1">1.4.4.2</ecNumber>
    </recommendedName>
    <alternativeName>
        <fullName evidence="1">Glycine cleavage system P-protein</fullName>
    </alternativeName>
    <alternativeName>
        <fullName evidence="1">Glycine decarboxylase</fullName>
    </alternativeName>
    <alternativeName>
        <fullName evidence="1">Glycine dehydrogenase (aminomethyl-transferring)</fullName>
    </alternativeName>
</protein>
<evidence type="ECO:0000255" key="1">
    <source>
        <dbReference type="HAMAP-Rule" id="MF_00711"/>
    </source>
</evidence>
<accession>A0QGN2</accession>
<keyword id="KW-0560">Oxidoreductase</keyword>
<keyword id="KW-0663">Pyridoxal phosphate</keyword>
<sequence length="941" mass="99961">MPDHTTFAARHIGPDPQAVAAMLDVIGVGSLDELAAKAVPAGIRDRLSADGIAPGLDRLPPPASETEALAELRGLAEANTVAVSMIGQGYYDTLTPPVLLRNILENPAWYTAYTPYQPEISQGRLEALLNFQTMVADLTGLEIANASMLDEGTAAAEAMTLMHRASRGKSNRLAVDVDVFAQTAAIVATRARPLGIEIVTADLRDGLPDGDFFGVIAQLPGASGAITDWAALVAQAHERGALVALGADLLALTLITPPGEIGADVAFGTTQRFGVPMGFGGPHAGYLAVHANHARQLPGRLVGVSLDADGSPAYRLALQTREQHIRRDKATSNICTAQVLLAVMAAMYASYHGAEGLTAIARRVHGHAEAIAAALGTAVVHDRYFDTVLARVPGRAHEVIAAAKARGINLWRVDDDHVSVACDEATTDEHVAAVLEAFGVAPAEPVASEIATRTSEFLTHPAFTQYRTETAMMRYLRTLADKDIALDRSMIPLGSCTMKLNAAAEMEPITWPEFARQHPFAPASDTPGLRRLIGDLENWLVAITGYDAVSLQPNAGSQGEYAGLLAIHDYHASRGEPHRDICLIPSSAHGTNAASAALAGMRVVVVGCHDNGDVDLDDLRAKVTDHRDRLSTLMITYPSTHGVYEHDIAEICAAVHDAGGQVYVDGANLNALVGLARPGKFGGDVSHLNLHKTFCIPHGGGGPGVGPVAVRSHLAPFLPGHPHAPELPQGHPVSSAPYGSASILPISWAYIRMMGADGLRAASLTAITSANYIARRLDEYFPVLYTGENGMVAHECILDLRPITKATGVTVDDVAKRLADYGFHAPTMSFPVAGTLMVEPTESETLTEVDAFCDAMIAIRGEIDRVGAGEWPVEDNPLRGAPHTAECLVTTDWDHPYSREQAAYPLGKDFRPKVWPPVRRIDGAYGDRNLVCSCPPVEAFA</sequence>
<organism>
    <name type="scientific">Mycobacterium avium (strain 104)</name>
    <dbReference type="NCBI Taxonomy" id="243243"/>
    <lineage>
        <taxon>Bacteria</taxon>
        <taxon>Bacillati</taxon>
        <taxon>Actinomycetota</taxon>
        <taxon>Actinomycetes</taxon>
        <taxon>Mycobacteriales</taxon>
        <taxon>Mycobacteriaceae</taxon>
        <taxon>Mycobacterium</taxon>
        <taxon>Mycobacterium avium complex (MAC)</taxon>
    </lineage>
</organism>
<feature type="chain" id="PRO_1000045589" description="Glycine dehydrogenase (decarboxylating)">
    <location>
        <begin position="1"/>
        <end position="941"/>
    </location>
</feature>
<feature type="modified residue" description="N6-(pyridoxal phosphate)lysine" evidence="1">
    <location>
        <position position="692"/>
    </location>
</feature>
<dbReference type="EC" id="1.4.4.2" evidence="1"/>
<dbReference type="EMBL" id="CP000479">
    <property type="protein sequence ID" value="ABK68698.1"/>
    <property type="molecule type" value="Genomic_DNA"/>
</dbReference>
<dbReference type="RefSeq" id="WP_011725113.1">
    <property type="nucleotide sequence ID" value="NC_008595.1"/>
</dbReference>
<dbReference type="SMR" id="A0QGN2"/>
<dbReference type="KEGG" id="mav:MAV_2884"/>
<dbReference type="HOGENOM" id="CLU_004620_3_2_11"/>
<dbReference type="Proteomes" id="UP000001574">
    <property type="component" value="Chromosome"/>
</dbReference>
<dbReference type="GO" id="GO:0005829">
    <property type="term" value="C:cytosol"/>
    <property type="evidence" value="ECO:0007669"/>
    <property type="project" value="TreeGrafter"/>
</dbReference>
<dbReference type="GO" id="GO:0005960">
    <property type="term" value="C:glycine cleavage complex"/>
    <property type="evidence" value="ECO:0007669"/>
    <property type="project" value="TreeGrafter"/>
</dbReference>
<dbReference type="GO" id="GO:0016594">
    <property type="term" value="F:glycine binding"/>
    <property type="evidence" value="ECO:0007669"/>
    <property type="project" value="TreeGrafter"/>
</dbReference>
<dbReference type="GO" id="GO:0004375">
    <property type="term" value="F:glycine dehydrogenase (decarboxylating) activity"/>
    <property type="evidence" value="ECO:0007669"/>
    <property type="project" value="UniProtKB-EC"/>
</dbReference>
<dbReference type="GO" id="GO:0030170">
    <property type="term" value="F:pyridoxal phosphate binding"/>
    <property type="evidence" value="ECO:0007669"/>
    <property type="project" value="TreeGrafter"/>
</dbReference>
<dbReference type="GO" id="GO:0019464">
    <property type="term" value="P:glycine decarboxylation via glycine cleavage system"/>
    <property type="evidence" value="ECO:0007669"/>
    <property type="project" value="UniProtKB-UniRule"/>
</dbReference>
<dbReference type="CDD" id="cd00613">
    <property type="entry name" value="GDC-P"/>
    <property type="match status" value="2"/>
</dbReference>
<dbReference type="FunFam" id="3.90.1150.10:FF:000059">
    <property type="entry name" value="Glycine dehydrogenase (decarboxylating)"/>
    <property type="match status" value="1"/>
</dbReference>
<dbReference type="FunFam" id="3.40.640.10:FF:000005">
    <property type="entry name" value="Glycine dehydrogenase (decarboxylating), mitochondrial"/>
    <property type="match status" value="1"/>
</dbReference>
<dbReference type="FunFam" id="3.40.640.10:FF:000007">
    <property type="entry name" value="glycine dehydrogenase (Decarboxylating), mitochondrial"/>
    <property type="match status" value="1"/>
</dbReference>
<dbReference type="Gene3D" id="3.90.1150.10">
    <property type="entry name" value="Aspartate Aminotransferase, domain 1"/>
    <property type="match status" value="2"/>
</dbReference>
<dbReference type="Gene3D" id="3.40.640.10">
    <property type="entry name" value="Type I PLP-dependent aspartate aminotransferase-like (Major domain)"/>
    <property type="match status" value="2"/>
</dbReference>
<dbReference type="HAMAP" id="MF_00711">
    <property type="entry name" value="GcvP"/>
    <property type="match status" value="1"/>
</dbReference>
<dbReference type="InterPro" id="IPR003437">
    <property type="entry name" value="GcvP"/>
</dbReference>
<dbReference type="InterPro" id="IPR049316">
    <property type="entry name" value="GDC-P_C"/>
</dbReference>
<dbReference type="InterPro" id="IPR049315">
    <property type="entry name" value="GDC-P_N"/>
</dbReference>
<dbReference type="InterPro" id="IPR020581">
    <property type="entry name" value="GDC_P"/>
</dbReference>
<dbReference type="InterPro" id="IPR015424">
    <property type="entry name" value="PyrdxlP-dep_Trfase"/>
</dbReference>
<dbReference type="InterPro" id="IPR015421">
    <property type="entry name" value="PyrdxlP-dep_Trfase_major"/>
</dbReference>
<dbReference type="InterPro" id="IPR015422">
    <property type="entry name" value="PyrdxlP-dep_Trfase_small"/>
</dbReference>
<dbReference type="NCBIfam" id="TIGR00461">
    <property type="entry name" value="gcvP"/>
    <property type="match status" value="1"/>
</dbReference>
<dbReference type="PANTHER" id="PTHR11773:SF1">
    <property type="entry name" value="GLYCINE DEHYDROGENASE (DECARBOXYLATING), MITOCHONDRIAL"/>
    <property type="match status" value="1"/>
</dbReference>
<dbReference type="PANTHER" id="PTHR11773">
    <property type="entry name" value="GLYCINE DEHYDROGENASE, DECARBOXYLATING"/>
    <property type="match status" value="1"/>
</dbReference>
<dbReference type="Pfam" id="PF21478">
    <property type="entry name" value="GcvP2_C"/>
    <property type="match status" value="1"/>
</dbReference>
<dbReference type="Pfam" id="PF02347">
    <property type="entry name" value="GDC-P"/>
    <property type="match status" value="2"/>
</dbReference>
<dbReference type="SUPFAM" id="SSF53383">
    <property type="entry name" value="PLP-dependent transferases"/>
    <property type="match status" value="2"/>
</dbReference>
<reference key="1">
    <citation type="submission" date="2006-10" db="EMBL/GenBank/DDBJ databases">
        <authorList>
            <person name="Fleischmann R.D."/>
            <person name="Dodson R.J."/>
            <person name="Haft D.H."/>
            <person name="Merkel J.S."/>
            <person name="Nelson W.C."/>
            <person name="Fraser C.M."/>
        </authorList>
    </citation>
    <scope>NUCLEOTIDE SEQUENCE [LARGE SCALE GENOMIC DNA]</scope>
    <source>
        <strain>104</strain>
    </source>
</reference>